<sequence length="303" mass="33117">MRKKLRAVIIGPGNIGTDLLIKMKRSDWIEPVWMVGIDPDSDGLKRARDMGIKTTHQGIDDFIDYLIADDIRIAFDATSAYVHEENSRKLNALGVVMIDLTPAAIGPYCIPPVNLEEHANNLEMNVNMVTCGGQATIPMVAAVSSVQKVDYAEIIATVSSRSVGPGTRANIDEFTRTTASAVEQIGGARKGKAIIVINPAEPPLMMRDTIHCLLSEDPDEVNISKSVYNMVKEVQKYVPGYRLVNGPIFDGRKVSIFMEVEGLGDFLPTYSGNLDIMTAAALRTAEMFAERVASKAITLPNRH</sequence>
<reference key="1">
    <citation type="submission" date="2007-06" db="EMBL/GenBank/DDBJ databases">
        <title>Complete sequence of Marinomonas sp. MWYL1.</title>
        <authorList>
            <consortium name="US DOE Joint Genome Institute"/>
            <person name="Copeland A."/>
            <person name="Lucas S."/>
            <person name="Lapidus A."/>
            <person name="Barry K."/>
            <person name="Glavina del Rio T."/>
            <person name="Dalin E."/>
            <person name="Tice H."/>
            <person name="Pitluck S."/>
            <person name="Kiss H."/>
            <person name="Brettin T."/>
            <person name="Bruce D."/>
            <person name="Detter J.C."/>
            <person name="Han C."/>
            <person name="Schmutz J."/>
            <person name="Larimer F."/>
            <person name="Land M."/>
            <person name="Hauser L."/>
            <person name="Kyrpides N."/>
            <person name="Kim E."/>
            <person name="Johnston A.W.B."/>
            <person name="Todd J.D."/>
            <person name="Rogers R."/>
            <person name="Wexler M."/>
            <person name="Bond P.L."/>
            <person name="Li Y."/>
            <person name="Richardson P."/>
        </authorList>
    </citation>
    <scope>NUCLEOTIDE SEQUENCE [LARGE SCALE GENOMIC DNA]</scope>
    <source>
        <strain>MWYL1</strain>
    </source>
</reference>
<dbReference type="EC" id="1.2.1.10" evidence="1"/>
<dbReference type="EMBL" id="CP000749">
    <property type="protein sequence ID" value="ABR72701.1"/>
    <property type="molecule type" value="Genomic_DNA"/>
</dbReference>
<dbReference type="SMR" id="A6W1X2"/>
<dbReference type="STRING" id="400668.Mmwyl1_3802"/>
<dbReference type="KEGG" id="mmw:Mmwyl1_3802"/>
<dbReference type="eggNOG" id="COG4569">
    <property type="taxonomic scope" value="Bacteria"/>
</dbReference>
<dbReference type="HOGENOM" id="CLU_062208_0_0_6"/>
<dbReference type="OrthoDB" id="9786743at2"/>
<dbReference type="GO" id="GO:0008774">
    <property type="term" value="F:acetaldehyde dehydrogenase (acetylating) activity"/>
    <property type="evidence" value="ECO:0007669"/>
    <property type="project" value="UniProtKB-UniRule"/>
</dbReference>
<dbReference type="GO" id="GO:0051287">
    <property type="term" value="F:NAD binding"/>
    <property type="evidence" value="ECO:0007669"/>
    <property type="project" value="UniProtKB-UniRule"/>
</dbReference>
<dbReference type="GO" id="GO:0009056">
    <property type="term" value="P:catabolic process"/>
    <property type="evidence" value="ECO:0007669"/>
    <property type="project" value="UniProtKB-KW"/>
</dbReference>
<dbReference type="CDD" id="cd23933">
    <property type="entry name" value="ALDH_C"/>
    <property type="match status" value="1"/>
</dbReference>
<dbReference type="Gene3D" id="3.30.360.10">
    <property type="entry name" value="Dihydrodipicolinate Reductase, domain 2"/>
    <property type="match status" value="1"/>
</dbReference>
<dbReference type="Gene3D" id="3.40.50.720">
    <property type="entry name" value="NAD(P)-binding Rossmann-like Domain"/>
    <property type="match status" value="1"/>
</dbReference>
<dbReference type="HAMAP" id="MF_01657">
    <property type="entry name" value="Ac_ald_DH_ac"/>
    <property type="match status" value="1"/>
</dbReference>
<dbReference type="InterPro" id="IPR003361">
    <property type="entry name" value="Acetaldehyde_dehydrogenase"/>
</dbReference>
<dbReference type="InterPro" id="IPR015426">
    <property type="entry name" value="Acetylaldehyde_DH_C"/>
</dbReference>
<dbReference type="InterPro" id="IPR036291">
    <property type="entry name" value="NAD(P)-bd_dom_sf"/>
</dbReference>
<dbReference type="InterPro" id="IPR000534">
    <property type="entry name" value="Semialdehyde_DH_NAD-bd"/>
</dbReference>
<dbReference type="NCBIfam" id="TIGR03215">
    <property type="entry name" value="ac_ald_DH_ac"/>
    <property type="match status" value="1"/>
</dbReference>
<dbReference type="NCBIfam" id="NF006157">
    <property type="entry name" value="PRK08300.1"/>
    <property type="match status" value="1"/>
</dbReference>
<dbReference type="Pfam" id="PF09290">
    <property type="entry name" value="AcetDehyd-dimer"/>
    <property type="match status" value="1"/>
</dbReference>
<dbReference type="Pfam" id="PF01118">
    <property type="entry name" value="Semialdhyde_dh"/>
    <property type="match status" value="1"/>
</dbReference>
<dbReference type="PIRSF" id="PIRSF015689">
    <property type="entry name" value="Actaldh_dh_actl"/>
    <property type="match status" value="1"/>
</dbReference>
<dbReference type="SMART" id="SM00859">
    <property type="entry name" value="Semialdhyde_dh"/>
    <property type="match status" value="1"/>
</dbReference>
<dbReference type="SUPFAM" id="SSF55347">
    <property type="entry name" value="Glyceraldehyde-3-phosphate dehydrogenase-like, C-terminal domain"/>
    <property type="match status" value="1"/>
</dbReference>
<dbReference type="SUPFAM" id="SSF51735">
    <property type="entry name" value="NAD(P)-binding Rossmann-fold domains"/>
    <property type="match status" value="1"/>
</dbReference>
<organism>
    <name type="scientific">Marinomonas sp. (strain MWYL1)</name>
    <dbReference type="NCBI Taxonomy" id="400668"/>
    <lineage>
        <taxon>Bacteria</taxon>
        <taxon>Pseudomonadati</taxon>
        <taxon>Pseudomonadota</taxon>
        <taxon>Gammaproteobacteria</taxon>
        <taxon>Oceanospirillales</taxon>
        <taxon>Oceanospirillaceae</taxon>
        <taxon>Marinomonas</taxon>
    </lineage>
</organism>
<comment type="catalytic activity">
    <reaction evidence="1">
        <text>acetaldehyde + NAD(+) + CoA = acetyl-CoA + NADH + H(+)</text>
        <dbReference type="Rhea" id="RHEA:23288"/>
        <dbReference type="ChEBI" id="CHEBI:15343"/>
        <dbReference type="ChEBI" id="CHEBI:15378"/>
        <dbReference type="ChEBI" id="CHEBI:57287"/>
        <dbReference type="ChEBI" id="CHEBI:57288"/>
        <dbReference type="ChEBI" id="CHEBI:57540"/>
        <dbReference type="ChEBI" id="CHEBI:57945"/>
        <dbReference type="EC" id="1.2.1.10"/>
    </reaction>
</comment>
<comment type="similarity">
    <text evidence="1">Belongs to the acetaldehyde dehydrogenase family.</text>
</comment>
<name>ACDH_MARMS</name>
<keyword id="KW-0058">Aromatic hydrocarbons catabolism</keyword>
<keyword id="KW-0520">NAD</keyword>
<keyword id="KW-0560">Oxidoreductase</keyword>
<evidence type="ECO:0000255" key="1">
    <source>
        <dbReference type="HAMAP-Rule" id="MF_01657"/>
    </source>
</evidence>
<accession>A6W1X2</accession>
<proteinExistence type="inferred from homology"/>
<gene>
    <name type="ordered locus">Mmwyl1_3802</name>
</gene>
<protein>
    <recommendedName>
        <fullName evidence="1">Acetaldehyde dehydrogenase</fullName>
        <ecNumber evidence="1">1.2.1.10</ecNumber>
    </recommendedName>
    <alternativeName>
        <fullName evidence="1">Acetaldehyde dehydrogenase [acetylating]</fullName>
    </alternativeName>
</protein>
<feature type="chain" id="PRO_0000387665" description="Acetaldehyde dehydrogenase">
    <location>
        <begin position="1"/>
        <end position="303"/>
    </location>
</feature>
<feature type="active site" description="Acyl-thioester intermediate" evidence="1">
    <location>
        <position position="131"/>
    </location>
</feature>
<feature type="binding site" evidence="1">
    <location>
        <begin position="162"/>
        <end position="170"/>
    </location>
    <ligand>
        <name>NAD(+)</name>
        <dbReference type="ChEBI" id="CHEBI:57540"/>
    </ligand>
</feature>
<feature type="binding site" evidence="1">
    <location>
        <position position="273"/>
    </location>
    <ligand>
        <name>NAD(+)</name>
        <dbReference type="ChEBI" id="CHEBI:57540"/>
    </ligand>
</feature>